<proteinExistence type="inferred from homology"/>
<evidence type="ECO:0000255" key="1">
    <source>
        <dbReference type="HAMAP-Rule" id="MF_00182"/>
    </source>
</evidence>
<sequence length="314" mass="35518">MKKLKIVFAGTEYFSAEHLHALITSSHDVISVITQPDRYSGRGQKITFSPVKILSLNNGIPIFQPENLNDTDFQNKLLKLNADIMTVVSYGKIIPKKILNMFSKGCINVHASLLPRWRGATPIQSSILHGDKKTGISIIQMNDEIDSGNIMHSITCSISSKDTTKTLSLKLIKIGIEALLEVLEKIILNTVIYKKQNEKNVILSKKIYKKDALLDWNLSAEKLERLIRAFNPWPICYFLSQNKNIKVWQSEVIPITQNNRSVGEIISYNKNGIQINTSHQILNIKKLQFPGKKIIDVKNVIISKKKLFKIGTIL</sequence>
<gene>
    <name evidence="1" type="primary">fmt</name>
    <name type="ordered locus">BUAP5A_490</name>
</gene>
<comment type="function">
    <text evidence="1">Attaches a formyl group to the free amino group of methionyl-tRNA(fMet). The formyl group appears to play a dual role in the initiator identity of N-formylmethionyl-tRNA by promoting its recognition by IF2 and preventing the misappropriation of this tRNA by the elongation apparatus.</text>
</comment>
<comment type="catalytic activity">
    <reaction evidence="1">
        <text>L-methionyl-tRNA(fMet) + (6R)-10-formyltetrahydrofolate = N-formyl-L-methionyl-tRNA(fMet) + (6S)-5,6,7,8-tetrahydrofolate + H(+)</text>
        <dbReference type="Rhea" id="RHEA:24380"/>
        <dbReference type="Rhea" id="RHEA-COMP:9952"/>
        <dbReference type="Rhea" id="RHEA-COMP:9953"/>
        <dbReference type="ChEBI" id="CHEBI:15378"/>
        <dbReference type="ChEBI" id="CHEBI:57453"/>
        <dbReference type="ChEBI" id="CHEBI:78530"/>
        <dbReference type="ChEBI" id="CHEBI:78844"/>
        <dbReference type="ChEBI" id="CHEBI:195366"/>
        <dbReference type="EC" id="2.1.2.9"/>
    </reaction>
</comment>
<comment type="similarity">
    <text evidence="1">Belongs to the Fmt family.</text>
</comment>
<accession>B8D9S0</accession>
<reference key="1">
    <citation type="journal article" date="2009" name="Science">
        <title>The dynamics and time scale of ongoing genomic erosion in symbiotic bacteria.</title>
        <authorList>
            <person name="Moran N.A."/>
            <person name="McLaughlin H.J."/>
            <person name="Sorek R."/>
        </authorList>
    </citation>
    <scope>NUCLEOTIDE SEQUENCE [LARGE SCALE GENOMIC DNA]</scope>
    <source>
        <strain>5A</strain>
    </source>
</reference>
<keyword id="KW-0648">Protein biosynthesis</keyword>
<keyword id="KW-0808">Transferase</keyword>
<name>FMT_BUCA5</name>
<protein>
    <recommendedName>
        <fullName evidence="1">Methionyl-tRNA formyltransferase</fullName>
        <ecNumber evidence="1">2.1.2.9</ecNumber>
    </recommendedName>
</protein>
<organism>
    <name type="scientific">Buchnera aphidicola subsp. Acyrthosiphon pisum (strain 5A)</name>
    <dbReference type="NCBI Taxonomy" id="563178"/>
    <lineage>
        <taxon>Bacteria</taxon>
        <taxon>Pseudomonadati</taxon>
        <taxon>Pseudomonadota</taxon>
        <taxon>Gammaproteobacteria</taxon>
        <taxon>Enterobacterales</taxon>
        <taxon>Erwiniaceae</taxon>
        <taxon>Buchnera</taxon>
    </lineage>
</organism>
<dbReference type="EC" id="2.1.2.9" evidence="1"/>
<dbReference type="EMBL" id="CP001161">
    <property type="protein sequence ID" value="ACL30841.1"/>
    <property type="molecule type" value="Genomic_DNA"/>
</dbReference>
<dbReference type="RefSeq" id="WP_009874448.1">
    <property type="nucleotide sequence ID" value="NC_011833.1"/>
</dbReference>
<dbReference type="SMR" id="B8D9S0"/>
<dbReference type="KEGG" id="bap:BUAP5A_490"/>
<dbReference type="HOGENOM" id="CLU_033347_1_2_6"/>
<dbReference type="OrthoDB" id="9802815at2"/>
<dbReference type="Proteomes" id="UP000006904">
    <property type="component" value="Chromosome"/>
</dbReference>
<dbReference type="GO" id="GO:0005829">
    <property type="term" value="C:cytosol"/>
    <property type="evidence" value="ECO:0007669"/>
    <property type="project" value="TreeGrafter"/>
</dbReference>
<dbReference type="GO" id="GO:0004479">
    <property type="term" value="F:methionyl-tRNA formyltransferase activity"/>
    <property type="evidence" value="ECO:0007669"/>
    <property type="project" value="UniProtKB-UniRule"/>
</dbReference>
<dbReference type="CDD" id="cd08646">
    <property type="entry name" value="FMT_core_Met-tRNA-FMT_N"/>
    <property type="match status" value="1"/>
</dbReference>
<dbReference type="CDD" id="cd08704">
    <property type="entry name" value="Met_tRNA_FMT_C"/>
    <property type="match status" value="1"/>
</dbReference>
<dbReference type="Gene3D" id="3.10.25.10">
    <property type="entry name" value="Formyl transferase, C-terminal domain"/>
    <property type="match status" value="1"/>
</dbReference>
<dbReference type="Gene3D" id="3.40.50.170">
    <property type="entry name" value="Formyl transferase, N-terminal domain"/>
    <property type="match status" value="1"/>
</dbReference>
<dbReference type="HAMAP" id="MF_00182">
    <property type="entry name" value="Formyl_trans"/>
    <property type="match status" value="1"/>
</dbReference>
<dbReference type="InterPro" id="IPR005794">
    <property type="entry name" value="Fmt"/>
</dbReference>
<dbReference type="InterPro" id="IPR005793">
    <property type="entry name" value="Formyl_trans_C"/>
</dbReference>
<dbReference type="InterPro" id="IPR037022">
    <property type="entry name" value="Formyl_trans_C_sf"/>
</dbReference>
<dbReference type="InterPro" id="IPR002376">
    <property type="entry name" value="Formyl_transf_N"/>
</dbReference>
<dbReference type="InterPro" id="IPR036477">
    <property type="entry name" value="Formyl_transf_N_sf"/>
</dbReference>
<dbReference type="InterPro" id="IPR011034">
    <property type="entry name" value="Formyl_transferase-like_C_sf"/>
</dbReference>
<dbReference type="InterPro" id="IPR044135">
    <property type="entry name" value="Met-tRNA-FMT_C"/>
</dbReference>
<dbReference type="InterPro" id="IPR041711">
    <property type="entry name" value="Met-tRNA-FMT_N"/>
</dbReference>
<dbReference type="NCBIfam" id="TIGR00460">
    <property type="entry name" value="fmt"/>
    <property type="match status" value="1"/>
</dbReference>
<dbReference type="PANTHER" id="PTHR11138">
    <property type="entry name" value="METHIONYL-TRNA FORMYLTRANSFERASE"/>
    <property type="match status" value="1"/>
</dbReference>
<dbReference type="PANTHER" id="PTHR11138:SF5">
    <property type="entry name" value="METHIONYL-TRNA FORMYLTRANSFERASE, MITOCHONDRIAL"/>
    <property type="match status" value="1"/>
</dbReference>
<dbReference type="Pfam" id="PF02911">
    <property type="entry name" value="Formyl_trans_C"/>
    <property type="match status" value="1"/>
</dbReference>
<dbReference type="Pfam" id="PF00551">
    <property type="entry name" value="Formyl_trans_N"/>
    <property type="match status" value="1"/>
</dbReference>
<dbReference type="SUPFAM" id="SSF50486">
    <property type="entry name" value="FMT C-terminal domain-like"/>
    <property type="match status" value="1"/>
</dbReference>
<dbReference type="SUPFAM" id="SSF53328">
    <property type="entry name" value="Formyltransferase"/>
    <property type="match status" value="1"/>
</dbReference>
<feature type="chain" id="PRO_1000190011" description="Methionyl-tRNA formyltransferase">
    <location>
        <begin position="1"/>
        <end position="314"/>
    </location>
</feature>
<feature type="binding site" evidence="1">
    <location>
        <begin position="112"/>
        <end position="115"/>
    </location>
    <ligand>
        <name>(6S)-5,6,7,8-tetrahydrofolate</name>
        <dbReference type="ChEBI" id="CHEBI:57453"/>
    </ligand>
</feature>